<comment type="function">
    <text evidence="1">Importin beta subunit that functions in nuclear protein import through association with the importin alpha subunit, which binds to the clasical nuclear localization signal (cNLS) in cargo substrates. Docking of the importin/substrate complex to the nuclear pore complex (NPC) is mediated by importin beta through binding to nucleoporin FxFG repeats and the complex is subsequently translocated through the pore by an energy requiring, Ran-dependent mechanism. At the nucleoplasmic side of the NPC, GTP-Ran binds to importin beta and the three components separate, leading to release of the cargo. Importin alpha and beta are re-exported from the nucleus to the cytoplasm where GTP hydrolysis releases Ran from importin beta. The directionality of nuclear import is thought to be conferred by an asymmetric distribution of the GTP- and GDP-bound forms of Ran between the cytoplasm and nucleus.</text>
</comment>
<comment type="subunit">
    <text evidence="1">Forms a complex with an importin alpha subunit. Interacts with Ran; interacts specifically with the GTP-bound form of Ran (GTP-Ran), protecting it from GTP hydrolysis and nucleotide exchange. Interacts with nucleoporins.</text>
</comment>
<comment type="subcellular location">
    <subcellularLocation>
        <location evidence="1">Cytoplasm</location>
    </subcellularLocation>
    <subcellularLocation>
        <location evidence="3 4">Nucleus envelope</location>
    </subcellularLocation>
    <subcellularLocation>
        <location evidence="1">Nucleus</location>
        <location evidence="1">Nuclear pore complex</location>
    </subcellularLocation>
</comment>
<comment type="disruption phenotype">
    <text evidence="3">Essential for growth. Spores germinate, but fail to divide.</text>
</comment>
<comment type="similarity">
    <text evidence="5">Belongs to the importin beta family. Importin beta-1 subfamily.</text>
</comment>
<keyword id="KW-0963">Cytoplasm</keyword>
<keyword id="KW-0509">mRNA transport</keyword>
<keyword id="KW-0906">Nuclear pore complex</keyword>
<keyword id="KW-0539">Nucleus</keyword>
<keyword id="KW-0653">Protein transport</keyword>
<keyword id="KW-1185">Reference proteome</keyword>
<keyword id="KW-0677">Repeat</keyword>
<keyword id="KW-0811">Translocation</keyword>
<keyword id="KW-0813">Transport</keyword>
<proteinExistence type="inferred from homology"/>
<dbReference type="EMBL" id="CU329670">
    <property type="protein sequence ID" value="CAB11082.1"/>
    <property type="molecule type" value="Genomic_DNA"/>
</dbReference>
<dbReference type="PIR" id="T38016">
    <property type="entry name" value="T38016"/>
</dbReference>
<dbReference type="RefSeq" id="NP_594233.1">
    <property type="nucleotide sequence ID" value="NM_001019656.2"/>
</dbReference>
<dbReference type="SMR" id="O13864"/>
<dbReference type="BioGRID" id="278955">
    <property type="interactions" value="6"/>
</dbReference>
<dbReference type="FunCoup" id="O13864">
    <property type="interactions" value="1168"/>
</dbReference>
<dbReference type="STRING" id="284812.O13864"/>
<dbReference type="iPTMnet" id="O13864"/>
<dbReference type="PaxDb" id="4896-SPAC1B1.03c.1"/>
<dbReference type="EnsemblFungi" id="SPAC1B1.03c.1">
    <property type="protein sequence ID" value="SPAC1B1.03c.1:pep"/>
    <property type="gene ID" value="SPAC1B1.03c"/>
</dbReference>
<dbReference type="GeneID" id="2542496"/>
<dbReference type="KEGG" id="spo:2542496"/>
<dbReference type="PomBase" id="SPAC1B1.03c">
    <property type="gene designation" value="kap95"/>
</dbReference>
<dbReference type="VEuPathDB" id="FungiDB:SPAC1B1.03c"/>
<dbReference type="eggNOG" id="KOG1241">
    <property type="taxonomic scope" value="Eukaryota"/>
</dbReference>
<dbReference type="HOGENOM" id="CLU_008296_1_0_1"/>
<dbReference type="InParanoid" id="O13864"/>
<dbReference type="OMA" id="QQYQERW"/>
<dbReference type="PhylomeDB" id="O13864"/>
<dbReference type="Reactome" id="R-SPO-2995383">
    <property type="pathway name" value="Initiation of Nuclear Envelope (NE) Reformation"/>
</dbReference>
<dbReference type="Reactome" id="R-SPO-6798695">
    <property type="pathway name" value="Neutrophil degranulation"/>
</dbReference>
<dbReference type="Reactome" id="R-SPO-68616">
    <property type="pathway name" value="Assembly of the ORC complex at the origin of replication"/>
</dbReference>
<dbReference type="PRO" id="PR:O13864"/>
<dbReference type="Proteomes" id="UP000002485">
    <property type="component" value="Chromosome I"/>
</dbReference>
<dbReference type="GO" id="GO:0005737">
    <property type="term" value="C:cytoplasm"/>
    <property type="evidence" value="ECO:0000318"/>
    <property type="project" value="GO_Central"/>
</dbReference>
<dbReference type="GO" id="GO:1990023">
    <property type="term" value="C:mitotic spindle midzone"/>
    <property type="evidence" value="ECO:0000314"/>
    <property type="project" value="PomBase"/>
</dbReference>
<dbReference type="GO" id="GO:0005635">
    <property type="term" value="C:nuclear envelope"/>
    <property type="evidence" value="ECO:0007005"/>
    <property type="project" value="PomBase"/>
</dbReference>
<dbReference type="GO" id="GO:0034399">
    <property type="term" value="C:nuclear periphery"/>
    <property type="evidence" value="ECO:0000314"/>
    <property type="project" value="PomBase"/>
</dbReference>
<dbReference type="GO" id="GO:0005643">
    <property type="term" value="C:nuclear pore"/>
    <property type="evidence" value="ECO:0000303"/>
    <property type="project" value="PomBase"/>
</dbReference>
<dbReference type="GO" id="GO:0005634">
    <property type="term" value="C:nucleus"/>
    <property type="evidence" value="ECO:0000318"/>
    <property type="project" value="GO_Central"/>
</dbReference>
<dbReference type="GO" id="GO:0005525">
    <property type="term" value="F:GTP binding"/>
    <property type="evidence" value="ECO:0000303"/>
    <property type="project" value="PomBase"/>
</dbReference>
<dbReference type="GO" id="GO:0061608">
    <property type="term" value="F:nuclear import signal receptor activity"/>
    <property type="evidence" value="ECO:0000318"/>
    <property type="project" value="GO_Central"/>
</dbReference>
<dbReference type="GO" id="GO:0008139">
    <property type="term" value="F:nuclear localization sequence binding"/>
    <property type="evidence" value="ECO:0000318"/>
    <property type="project" value="GO_Central"/>
</dbReference>
<dbReference type="GO" id="GO:0031267">
    <property type="term" value="F:small GTPase binding"/>
    <property type="evidence" value="ECO:0007669"/>
    <property type="project" value="InterPro"/>
</dbReference>
<dbReference type="GO" id="GO:0051028">
    <property type="term" value="P:mRNA transport"/>
    <property type="evidence" value="ECO:0007669"/>
    <property type="project" value="UniProtKB-KW"/>
</dbReference>
<dbReference type="GO" id="GO:0006606">
    <property type="term" value="P:protein import into nucleus"/>
    <property type="evidence" value="ECO:0000318"/>
    <property type="project" value="GO_Central"/>
</dbReference>
<dbReference type="FunFam" id="1.25.10.10:FF:000027">
    <property type="entry name" value="Importin subunit beta-1"/>
    <property type="match status" value="1"/>
</dbReference>
<dbReference type="Gene3D" id="1.25.10.10">
    <property type="entry name" value="Leucine-rich Repeat Variant"/>
    <property type="match status" value="1"/>
</dbReference>
<dbReference type="InterPro" id="IPR011989">
    <property type="entry name" value="ARM-like"/>
</dbReference>
<dbReference type="InterPro" id="IPR016024">
    <property type="entry name" value="ARM-type_fold"/>
</dbReference>
<dbReference type="InterPro" id="IPR000225">
    <property type="entry name" value="Armadillo"/>
</dbReference>
<dbReference type="InterPro" id="IPR021133">
    <property type="entry name" value="HEAT_type_2"/>
</dbReference>
<dbReference type="InterPro" id="IPR001494">
    <property type="entry name" value="Importin-beta_N"/>
</dbReference>
<dbReference type="InterPro" id="IPR040122">
    <property type="entry name" value="Importin_beta"/>
</dbReference>
<dbReference type="PANTHER" id="PTHR10527">
    <property type="entry name" value="IMPORTIN BETA"/>
    <property type="match status" value="1"/>
</dbReference>
<dbReference type="Pfam" id="PF13513">
    <property type="entry name" value="HEAT_EZ"/>
    <property type="match status" value="1"/>
</dbReference>
<dbReference type="Pfam" id="PF03810">
    <property type="entry name" value="IBN_N"/>
    <property type="match status" value="1"/>
</dbReference>
<dbReference type="SMART" id="SM00185">
    <property type="entry name" value="ARM"/>
    <property type="match status" value="4"/>
</dbReference>
<dbReference type="SMART" id="SM00913">
    <property type="entry name" value="IBN_N"/>
    <property type="match status" value="1"/>
</dbReference>
<dbReference type="SUPFAM" id="SSF48371">
    <property type="entry name" value="ARM repeat"/>
    <property type="match status" value="1"/>
</dbReference>
<dbReference type="PROSITE" id="PS50077">
    <property type="entry name" value="HEAT_REPEAT"/>
    <property type="match status" value="1"/>
</dbReference>
<dbReference type="PROSITE" id="PS50166">
    <property type="entry name" value="IMPORTIN_B_NT"/>
    <property type="match status" value="1"/>
</dbReference>
<evidence type="ECO:0000250" key="1">
    <source>
        <dbReference type="UniProtKB" id="Q06142"/>
    </source>
</evidence>
<evidence type="ECO:0000255" key="2">
    <source>
        <dbReference type="PROSITE-ProRule" id="PRU00115"/>
    </source>
</evidence>
<evidence type="ECO:0000269" key="3">
    <source>
    </source>
</evidence>
<evidence type="ECO:0000269" key="4">
    <source>
    </source>
</evidence>
<evidence type="ECO:0000305" key="5"/>
<evidence type="ECO:0000312" key="6">
    <source>
        <dbReference type="PomBase" id="SPAC1B1.03c"/>
    </source>
</evidence>
<sequence>MNAGEFLAQTLSPDANVRLNAEKQLENAARTDFAQYMVLLAQELANDNSMPYIRMAAGLALKNAITAREEARKLEYQQLWQSLPVEIKQQVKSLALQTLGSSEHQAGQSAAQLVAAIAAYELATNQWPDLMVTLVANVGEGQPSALKQHSLQTIGYICESVSPEVLSAQSNAILTAVVAGARKEEPDAAVRLAALGALYDSLEFVRENFNNEYERNYIMQVVCEATQSPEASIQTAAFGCLVKIMHLYYDTMPFYMEKALFALTTQGMYNTNEQVALQAVEFWSTVCEEEIEVNLEIQEAQDLNEVPARQNHGFARAAAADILPVLLKLLCNQDEDADEDDWNISMAAATCLQLFAQVVGDLIVNPVLAFVEQNIQNPDWHQREAAVMAFGSVLEGPNVAMLTPLVNQALPVLINMMVDPVIFVKDTTAWALGQISSFVADAINPEIHLSPMVSALLQGLTDNPRIVANCCWAFMNLVCHFAPVDNHQTSVMTPFYEAIIGSLLHVTDQKGNENNSRTSGYETLGTLITFSSDSVLPMIANVLSIILTRLETSIQMQSQILDVEDRANHDELQSNLCNVLTSIIRRFGPDIRTSSDQIMNLLLQTMQTAPKQSVVHEDVLLAIGAMMNSLEEQFEVYVPSFVPFLSSALSNEQEYQLCSVAVGLVGDLARALNAKILPYCDDFMTRLVQDLQSSVLDRNVKPAILSCFSDIALAIGAAFQTYLEAVMVLLQQASSVQAPPGANFSMIDYVDALRLGIVEAYVGITQAVRTDNRLDLIQPYVHSMFTLLNMITADPECSESLTRAALGLLGDLAESFPKGELKSYFAADWVAALLNSGKTKISSQQTKDLARWATEQVKRQARA</sequence>
<organism>
    <name type="scientific">Schizosaccharomyces pombe (strain 972 / ATCC 24843)</name>
    <name type="common">Fission yeast</name>
    <dbReference type="NCBI Taxonomy" id="284812"/>
    <lineage>
        <taxon>Eukaryota</taxon>
        <taxon>Fungi</taxon>
        <taxon>Dikarya</taxon>
        <taxon>Ascomycota</taxon>
        <taxon>Taphrinomycotina</taxon>
        <taxon>Schizosaccharomycetes</taxon>
        <taxon>Schizosaccharomycetales</taxon>
        <taxon>Schizosaccharomycetaceae</taxon>
        <taxon>Schizosaccharomyces</taxon>
    </lineage>
</organism>
<reference key="1">
    <citation type="journal article" date="2002" name="Nature">
        <title>The genome sequence of Schizosaccharomyces pombe.</title>
        <authorList>
            <person name="Wood V."/>
            <person name="Gwilliam R."/>
            <person name="Rajandream M.A."/>
            <person name="Lyne M.H."/>
            <person name="Lyne R."/>
            <person name="Stewart A."/>
            <person name="Sgouros J.G."/>
            <person name="Peat N."/>
            <person name="Hayles J."/>
            <person name="Baker S.G."/>
            <person name="Basham D."/>
            <person name="Bowman S."/>
            <person name="Brooks K."/>
            <person name="Brown D."/>
            <person name="Brown S."/>
            <person name="Chillingworth T."/>
            <person name="Churcher C.M."/>
            <person name="Collins M."/>
            <person name="Connor R."/>
            <person name="Cronin A."/>
            <person name="Davis P."/>
            <person name="Feltwell T."/>
            <person name="Fraser A."/>
            <person name="Gentles S."/>
            <person name="Goble A."/>
            <person name="Hamlin N."/>
            <person name="Harris D.E."/>
            <person name="Hidalgo J."/>
            <person name="Hodgson G."/>
            <person name="Holroyd S."/>
            <person name="Hornsby T."/>
            <person name="Howarth S."/>
            <person name="Huckle E.J."/>
            <person name="Hunt S."/>
            <person name="Jagels K."/>
            <person name="James K.D."/>
            <person name="Jones L."/>
            <person name="Jones M."/>
            <person name="Leather S."/>
            <person name="McDonald S."/>
            <person name="McLean J."/>
            <person name="Mooney P."/>
            <person name="Moule S."/>
            <person name="Mungall K.L."/>
            <person name="Murphy L.D."/>
            <person name="Niblett D."/>
            <person name="Odell C."/>
            <person name="Oliver K."/>
            <person name="O'Neil S."/>
            <person name="Pearson D."/>
            <person name="Quail M.A."/>
            <person name="Rabbinowitsch E."/>
            <person name="Rutherford K.M."/>
            <person name="Rutter S."/>
            <person name="Saunders D."/>
            <person name="Seeger K."/>
            <person name="Sharp S."/>
            <person name="Skelton J."/>
            <person name="Simmonds M.N."/>
            <person name="Squares R."/>
            <person name="Squares S."/>
            <person name="Stevens K."/>
            <person name="Taylor K."/>
            <person name="Taylor R.G."/>
            <person name="Tivey A."/>
            <person name="Walsh S.V."/>
            <person name="Warren T."/>
            <person name="Whitehead S."/>
            <person name="Woodward J.R."/>
            <person name="Volckaert G."/>
            <person name="Aert R."/>
            <person name="Robben J."/>
            <person name="Grymonprez B."/>
            <person name="Weltjens I."/>
            <person name="Vanstreels E."/>
            <person name="Rieger M."/>
            <person name="Schaefer M."/>
            <person name="Mueller-Auer S."/>
            <person name="Gabel C."/>
            <person name="Fuchs M."/>
            <person name="Duesterhoeft A."/>
            <person name="Fritzc C."/>
            <person name="Holzer E."/>
            <person name="Moestl D."/>
            <person name="Hilbert H."/>
            <person name="Borzym K."/>
            <person name="Langer I."/>
            <person name="Beck A."/>
            <person name="Lehrach H."/>
            <person name="Reinhardt R."/>
            <person name="Pohl T.M."/>
            <person name="Eger P."/>
            <person name="Zimmermann W."/>
            <person name="Wedler H."/>
            <person name="Wambutt R."/>
            <person name="Purnelle B."/>
            <person name="Goffeau A."/>
            <person name="Cadieu E."/>
            <person name="Dreano S."/>
            <person name="Gloux S."/>
            <person name="Lelaure V."/>
            <person name="Mottier S."/>
            <person name="Galibert F."/>
            <person name="Aves S.J."/>
            <person name="Xiang Z."/>
            <person name="Hunt C."/>
            <person name="Moore K."/>
            <person name="Hurst S.M."/>
            <person name="Lucas M."/>
            <person name="Rochet M."/>
            <person name="Gaillardin C."/>
            <person name="Tallada V.A."/>
            <person name="Garzon A."/>
            <person name="Thode G."/>
            <person name="Daga R.R."/>
            <person name="Cruzado L."/>
            <person name="Jimenez J."/>
            <person name="Sanchez M."/>
            <person name="del Rey F."/>
            <person name="Benito J."/>
            <person name="Dominguez A."/>
            <person name="Revuelta J.L."/>
            <person name="Moreno S."/>
            <person name="Armstrong J."/>
            <person name="Forsburg S.L."/>
            <person name="Cerutti L."/>
            <person name="Lowe T."/>
            <person name="McCombie W.R."/>
            <person name="Paulsen I."/>
            <person name="Potashkin J."/>
            <person name="Shpakovski G.V."/>
            <person name="Ussery D."/>
            <person name="Barrell B.G."/>
            <person name="Nurse P."/>
        </authorList>
    </citation>
    <scope>NUCLEOTIDE SEQUENCE [LARGE SCALE GENOMIC DNA]</scope>
    <source>
        <strain>972 / ATCC 24843</strain>
    </source>
</reference>
<reference key="2">
    <citation type="journal article" date="2004" name="Yeast">
        <title>Identification of genes encoding putative nucleoporins and transport factors in the fission yeast Schizosaccharomyces pombe: a deletion analysis.</title>
        <authorList>
            <person name="Chen X.Q."/>
            <person name="Du X."/>
            <person name="Liu J."/>
            <person name="Balasubramanian M.K."/>
            <person name="Balasundaram D."/>
        </authorList>
    </citation>
    <scope>SUBCELLULAR LOCATION</scope>
    <scope>DISRUPTION PHENOTYPE</scope>
</reference>
<reference key="3">
    <citation type="journal article" date="2006" name="Nat. Biotechnol.">
        <title>ORFeome cloning and global analysis of protein localization in the fission yeast Schizosaccharomyces pombe.</title>
        <authorList>
            <person name="Matsuyama A."/>
            <person name="Arai R."/>
            <person name="Yashiroda Y."/>
            <person name="Shirai A."/>
            <person name="Kamata A."/>
            <person name="Sekido S."/>
            <person name="Kobayashi Y."/>
            <person name="Hashimoto A."/>
            <person name="Hamamoto M."/>
            <person name="Hiraoka Y."/>
            <person name="Horinouchi S."/>
            <person name="Yoshida M."/>
        </authorList>
    </citation>
    <scope>SUBCELLULAR LOCATION [LARGE SCALE ANALYSIS]</scope>
</reference>
<accession>O13864</accession>
<feature type="chain" id="PRO_0000120763" description="Importin subunit beta-1">
    <location>
        <begin position="1"/>
        <end position="863"/>
    </location>
</feature>
<feature type="repeat" description="HEAT 1" evidence="1">
    <location>
        <begin position="2"/>
        <end position="31"/>
    </location>
</feature>
<feature type="domain" description="Importin N-terminal" evidence="2">
    <location>
        <begin position="21"/>
        <end position="101"/>
    </location>
</feature>
<feature type="repeat" description="HEAT 2" evidence="1">
    <location>
        <begin position="33"/>
        <end position="62"/>
    </location>
</feature>
<feature type="repeat" description="HEAT 3" evidence="1">
    <location>
        <begin position="85"/>
        <end position="124"/>
    </location>
</feature>
<feature type="repeat" description="HEAT 4" evidence="1">
    <location>
        <begin position="129"/>
        <end position="159"/>
    </location>
</feature>
<feature type="repeat" description="HEAT 5" evidence="1">
    <location>
        <begin position="170"/>
        <end position="201"/>
    </location>
</feature>
<feature type="repeat" description="HEAT 6" evidence="1">
    <location>
        <begin position="212"/>
        <end position="248"/>
    </location>
</feature>
<feature type="repeat" description="HEAT 7" evidence="1">
    <location>
        <begin position="253"/>
        <end position="299"/>
    </location>
</feature>
<feature type="repeat" description="HEAT 8" evidence="1">
    <location>
        <begin position="314"/>
        <end position="360"/>
    </location>
</feature>
<feature type="repeat" description="HEAT 9" evidence="1">
    <location>
        <begin position="364"/>
        <end position="392"/>
    </location>
</feature>
<feature type="repeat" description="HEAT 10" evidence="1">
    <location>
        <begin position="399"/>
        <end position="439"/>
    </location>
</feature>
<feature type="repeat" description="HEAT 11" evidence="1">
    <location>
        <begin position="449"/>
        <end position="481"/>
    </location>
</feature>
<feature type="repeat" description="HEAT 12" evidence="1">
    <location>
        <begin position="496"/>
        <end position="530"/>
    </location>
</feature>
<feature type="repeat" description="HEAT 13" evidence="1">
    <location>
        <begin position="536"/>
        <end position="586"/>
    </location>
</feature>
<feature type="repeat" description="HEAT 14" evidence="1">
    <location>
        <begin position="592"/>
        <end position="630"/>
    </location>
</feature>
<feature type="repeat" description="HEAT 15" evidence="1">
    <location>
        <begin position="635"/>
        <end position="671"/>
    </location>
</feature>
<feature type="repeat" description="HEAT 16" evidence="1">
    <location>
        <begin position="677"/>
        <end position="715"/>
    </location>
</feature>
<feature type="repeat" description="HEAT 17" evidence="1">
    <location>
        <begin position="720"/>
        <end position="767"/>
    </location>
</feature>
<feature type="repeat" description="HEAT 18" evidence="1">
    <location>
        <begin position="778"/>
        <end position="815"/>
    </location>
</feature>
<feature type="repeat" description="HEAT 19" evidence="1">
    <location>
        <begin position="822"/>
        <end position="861"/>
    </location>
</feature>
<gene>
    <name evidence="1" type="primary">kap95</name>
    <name evidence="6" type="ORF">SPAC1B1.03c</name>
</gene>
<name>IMB1_SCHPO</name>
<protein>
    <recommendedName>
        <fullName evidence="1">Importin subunit beta-1</fullName>
    </recommendedName>
    <alternativeName>
        <fullName evidence="1">Importin-95</fullName>
    </alternativeName>
    <alternativeName>
        <fullName evidence="1">Karyopherin subunit beta-1</fullName>
    </alternativeName>
    <alternativeName>
        <fullName evidence="1">Karyopherin-95</fullName>
    </alternativeName>
</protein>